<organism>
    <name type="scientific">Saccharomyces cerevisiae (strain ATCC 204508 / S288c)</name>
    <name type="common">Baker's yeast</name>
    <dbReference type="NCBI Taxonomy" id="559292"/>
    <lineage>
        <taxon>Eukaryota</taxon>
        <taxon>Fungi</taxon>
        <taxon>Dikarya</taxon>
        <taxon>Ascomycota</taxon>
        <taxon>Saccharomycotina</taxon>
        <taxon>Saccharomycetes</taxon>
        <taxon>Saccharomycetales</taxon>
        <taxon>Saccharomycetaceae</taxon>
        <taxon>Saccharomyces</taxon>
    </lineage>
</organism>
<evidence type="ECO:0000250" key="1"/>
<evidence type="ECO:0000269" key="2">
    <source>
    </source>
</evidence>
<evidence type="ECO:0000269" key="3">
    <source>
    </source>
</evidence>
<evidence type="ECO:0000305" key="4"/>
<evidence type="ECO:0007829" key="5">
    <source>
        <dbReference type="PDB" id="6EU1"/>
    </source>
</evidence>
<evidence type="ECO:0007829" key="6">
    <source>
        <dbReference type="PDB" id="6EU3"/>
    </source>
</evidence>
<evidence type="ECO:0007829" key="7">
    <source>
        <dbReference type="PDB" id="6TUT"/>
    </source>
</evidence>
<evidence type="ECO:0007829" key="8">
    <source>
        <dbReference type="PDB" id="7Z31"/>
    </source>
</evidence>
<evidence type="ECO:0007829" key="9">
    <source>
        <dbReference type="PDB" id="8BWS"/>
    </source>
</evidence>
<name>RPC1_YEAST</name>
<gene>
    <name type="primary">RPO31</name>
    <name type="synonym">RPC1</name>
    <name type="synonym">RPC160</name>
    <name type="ordered locus">YOR116C</name>
    <name type="ORF">O3254</name>
    <name type="ORF">YOR3254C</name>
</gene>
<accession>P04051</accession>
<accession>D6W2H5</accession>
<sequence>MKEVVVSETPKRIKGLEFSALSAADIVAQSEVEVSTRDLFDLEKDRAPKANGALDPKMGVSSSSLECATCHGNLASCHGHFGHLKLALPVFHIGYFKATIQILQGICKNCSAILLSETDKRQFLHELRRPGVDNLRRMGILKKILDQCKKQRRCLHCGALNGVVKKAAAGAGSAALKIIHDTFRWVGKKSAPEKDIWVGEWKEVLAHNPELERYVKRCMDDLNPLKTLNLFKQIKSADCELLGIDATVPSGRPETYIWRYLPAPPVCIRPSVMMQDSPASNEDDLTVKLTEIVWTSSLIKAGLDKGISINNMMEHWDYLQLTVAMYINSDSVNPAMLPGSSNGGGKVKPIRGFCQRLKGKQGRFRGNLSGKRVDFSGRTVISPDPNLSIDEVAVPDRVAKVLTYPEKVTRYNRHKLQELIVNGPNVHPGANYLLKRNEDARRNLRYGDRMKLAKNLQIGDVVERHLEDGDVVLFNRQPSLHRLSILSHYAKIRPWRTFRLNECVCTPYNADFDGDEMNLHVPQTEEARAEAINLMGVKNNLLTPKSGEPIIAATQDFITGSYLISHKDSFYDRATLTQLLSMMSDGIEHFDIPPPAIMKPYYLWTGKQVFSLLIKPNHNSPVVINLDAKNKVFVPPKSKSLPNEMSQNDGFVIIRGSQILSGVMDKSVLGDGKKHSVFYTILRDYGPQEAANAMNRMAKLCARFLGNRGFSIGINDVTPADDLKQKKEELVEIAYHKCDELITLFNKGELETQPGCNEEQTLEAKIGGLLSKVREEVGDVCINELDNWNAPLIMATCGSKGSTLNVSQMVAVVGQQIISGNRVPDGFQDRSLPHFPKNSKTPQSKGFVRNSFFSGLSPPEFLFHAISGREGLVDTAVKTAETGYMSRRLMKSLEDLSCQYDNTVRTSANGIVQFTYGGDGLDPLEMEGNAQPVNFNRSWDHAYNITFNNQDKGLLPYAIMETANEILGPLEERLVRYDNSGCLVKREDLNKAEYVDQYDAERDFYHSLREYINGKATALANLRKSRGMLGLLEPPAKELQGIDPDETVPDNVKTSVSQLYRISEKSVRKFLEIALFKYRKARLEPGTAIGAIGAQSIGEPGTQMTLKTFHFAGVASMNVTLGVPRIKEIINASKVISTPIINAVLVNDNDERAARVVKGRVEKTLLSDVAFYVQDVYKDNLSFIQVRIDLGTIDKLQLELTIEDIAVAITRASKLKIQASDVNIIGKDRIAINVFPEGYKAKSISTSAKEPSENDVFYRMQQLRRALPDVVVKGLPDISRAVINIRDDGKRELLVEGYGLRDVMCTDGVIGSRTTTNHVLEVFSVLGIEAARYSIIREINYTMSNHGMSVDPRHIQLLGDVMTYKGEVLGITRFGLSKMRDSVLQLASFEKTTDHLFDAAFYMKKDAVEGVSECIILGQTMSIGTGSFKVVKGTNISEKDLVPKRCLFESLSNEAALKAN</sequence>
<proteinExistence type="evidence at protein level"/>
<protein>
    <recommendedName>
        <fullName>DNA-directed RNA polymerase III subunit RPC1</fullName>
        <shortName>RNA polymerase III subunit C1</shortName>
        <ecNumber>2.7.7.6</ecNumber>
    </recommendedName>
    <alternativeName>
        <fullName>DNA-directed RNA polymerase III largest subunit</fullName>
    </alternativeName>
    <alternativeName>
        <fullName>RNA polymerase III subunit C160</fullName>
    </alternativeName>
</protein>
<comment type="function">
    <text evidence="1">DNA-dependent RNA polymerase catalyzes the transcription of DNA into RNA using the four ribonucleoside triphosphates as substrates. Largest and catalytic core component of RNA polymerase III which synthesizes small RNAs, such as 5S rRNA and tRNAs. Forms the polymerase active center together with the second largest subunit. A single-stranded DNA template strand of the promoter is positioned within the central active site cleft of Pol III. A bridging helix emanates from RPC1 and crosses the cleft near the catalytic site and is thought to promote translocation of Pol III by acting as a ratchet that moves the RNA-DNA hybrid through the active site by switching from straight to bent conformations at each step of nucleotide addition (By similarity).</text>
</comment>
<comment type="catalytic activity">
    <reaction>
        <text>RNA(n) + a ribonucleoside 5'-triphosphate = RNA(n+1) + diphosphate</text>
        <dbReference type="Rhea" id="RHEA:21248"/>
        <dbReference type="Rhea" id="RHEA-COMP:14527"/>
        <dbReference type="Rhea" id="RHEA-COMP:17342"/>
        <dbReference type="ChEBI" id="CHEBI:33019"/>
        <dbReference type="ChEBI" id="CHEBI:61557"/>
        <dbReference type="ChEBI" id="CHEBI:140395"/>
        <dbReference type="EC" id="2.7.7.6"/>
    </reaction>
</comment>
<comment type="subunit">
    <text>Component of the RNA polymerase III (Pol III) complex consisting of 17 subunits.</text>
</comment>
<comment type="interaction">
    <interactant intactId="EBI-15810">
        <id>P04051</id>
    </interactant>
    <interactant intactId="EBI-10375">
        <id>P41910</id>
        <label>MAF1</label>
    </interactant>
    <organismsDiffer>false</organismsDiffer>
    <experiments>5</experiments>
</comment>
<comment type="interaction">
    <interactant intactId="EBI-15810">
        <id>P04051</id>
    </interactant>
    <interactant intactId="EBI-15854">
        <id>P35718</id>
        <label>RPC25</label>
    </interactant>
    <organismsDiffer>false</organismsDiffer>
    <experiments>4</experiments>
</comment>
<comment type="subcellular location">
    <subcellularLocation>
        <location evidence="2">Nucleus</location>
    </subcellularLocation>
</comment>
<comment type="miscellaneous">
    <text evidence="3">Present with 6020 molecules/cell in log phase SD medium.</text>
</comment>
<comment type="similarity">
    <text evidence="4">Belongs to the RNA polymerase beta' chain family.</text>
</comment>
<dbReference type="EC" id="2.7.7.6"/>
<dbReference type="EMBL" id="X03129">
    <property type="protein sequence ID" value="CAA26905.1"/>
    <property type="molecule type" value="Genomic_DNA"/>
</dbReference>
<dbReference type="EMBL" id="X90518">
    <property type="protein sequence ID" value="CAA62123.1"/>
    <property type="molecule type" value="Genomic_DNA"/>
</dbReference>
<dbReference type="EMBL" id="X94335">
    <property type="protein sequence ID" value="CAA64036.1"/>
    <property type="molecule type" value="Genomic_DNA"/>
</dbReference>
<dbReference type="EMBL" id="Z75024">
    <property type="protein sequence ID" value="CAA99314.1"/>
    <property type="molecule type" value="Genomic_DNA"/>
</dbReference>
<dbReference type="EMBL" id="BK006948">
    <property type="protein sequence ID" value="DAA10891.1"/>
    <property type="molecule type" value="Genomic_DNA"/>
</dbReference>
<dbReference type="PIR" id="A00694">
    <property type="entry name" value="RNBY3L"/>
</dbReference>
<dbReference type="RefSeq" id="NP_014759.1">
    <property type="nucleotide sequence ID" value="NM_001183535.1"/>
</dbReference>
<dbReference type="PDB" id="5FJ8">
    <property type="method" value="EM"/>
    <property type="resolution" value="3.90 A"/>
    <property type="chains" value="A=1-1460"/>
</dbReference>
<dbReference type="PDB" id="5FJ9">
    <property type="method" value="EM"/>
    <property type="resolution" value="4.60 A"/>
    <property type="chains" value="A=1-1460"/>
</dbReference>
<dbReference type="PDB" id="5FJA">
    <property type="method" value="EM"/>
    <property type="resolution" value="4.65 A"/>
    <property type="chains" value="A=1-1460"/>
</dbReference>
<dbReference type="PDB" id="6CNB">
    <property type="method" value="EM"/>
    <property type="resolution" value="4.10 A"/>
    <property type="chains" value="A=1-1460"/>
</dbReference>
<dbReference type="PDB" id="6CNC">
    <property type="method" value="EM"/>
    <property type="resolution" value="4.10 A"/>
    <property type="chains" value="A=1-1460"/>
</dbReference>
<dbReference type="PDB" id="6CND">
    <property type="method" value="EM"/>
    <property type="resolution" value="4.80 A"/>
    <property type="chains" value="A=1-1460"/>
</dbReference>
<dbReference type="PDB" id="6CNF">
    <property type="method" value="EM"/>
    <property type="resolution" value="4.50 A"/>
    <property type="chains" value="A=1-1460"/>
</dbReference>
<dbReference type="PDB" id="6EU0">
    <property type="method" value="EM"/>
    <property type="resolution" value="4.00 A"/>
    <property type="chains" value="A=1-1460"/>
</dbReference>
<dbReference type="PDB" id="6EU1">
    <property type="method" value="EM"/>
    <property type="resolution" value="3.40 A"/>
    <property type="chains" value="A=1-1460"/>
</dbReference>
<dbReference type="PDB" id="6EU2">
    <property type="method" value="EM"/>
    <property type="resolution" value="3.40 A"/>
    <property type="chains" value="A=1-1460"/>
</dbReference>
<dbReference type="PDB" id="6EU3">
    <property type="method" value="EM"/>
    <property type="resolution" value="3.30 A"/>
    <property type="chains" value="A=1-1460"/>
</dbReference>
<dbReference type="PDB" id="6F40">
    <property type="method" value="EM"/>
    <property type="resolution" value="3.70 A"/>
    <property type="chains" value="A=1-1460"/>
</dbReference>
<dbReference type="PDB" id="6F41">
    <property type="method" value="EM"/>
    <property type="resolution" value="4.30 A"/>
    <property type="chains" value="A=1-1460"/>
</dbReference>
<dbReference type="PDB" id="6F42">
    <property type="method" value="EM"/>
    <property type="resolution" value="5.50 A"/>
    <property type="chains" value="A=1-1460"/>
</dbReference>
<dbReference type="PDB" id="6F44">
    <property type="method" value="EM"/>
    <property type="resolution" value="4.20 A"/>
    <property type="chains" value="A=1-1460"/>
</dbReference>
<dbReference type="PDB" id="6TUT">
    <property type="method" value="EM"/>
    <property type="resolution" value="3.25 A"/>
    <property type="chains" value="A=1-1460"/>
</dbReference>
<dbReference type="PDB" id="7Z0H">
    <property type="method" value="EM"/>
    <property type="resolution" value="2.60 A"/>
    <property type="chains" value="A=1-1460"/>
</dbReference>
<dbReference type="PDB" id="7Z1L">
    <property type="method" value="EM"/>
    <property type="resolution" value="2.80 A"/>
    <property type="chains" value="A=1-1460"/>
</dbReference>
<dbReference type="PDB" id="7Z1M">
    <property type="method" value="EM"/>
    <property type="resolution" value="3.40 A"/>
    <property type="chains" value="A=1-1460"/>
</dbReference>
<dbReference type="PDB" id="7Z1N">
    <property type="method" value="EM"/>
    <property type="resolution" value="3.90 A"/>
    <property type="chains" value="A=1-1460"/>
</dbReference>
<dbReference type="PDB" id="7Z1O">
    <property type="method" value="EM"/>
    <property type="resolution" value="2.70 A"/>
    <property type="chains" value="A=1-1460"/>
</dbReference>
<dbReference type="PDB" id="7Z2Z">
    <property type="method" value="EM"/>
    <property type="resolution" value="3.07 A"/>
    <property type="chains" value="A=1-1460"/>
</dbReference>
<dbReference type="PDB" id="7Z30">
    <property type="method" value="EM"/>
    <property type="resolution" value="2.90 A"/>
    <property type="chains" value="A=1-1460"/>
</dbReference>
<dbReference type="PDB" id="7Z31">
    <property type="method" value="EM"/>
    <property type="resolution" value="2.76 A"/>
    <property type="chains" value="A=1-1460"/>
</dbReference>
<dbReference type="PDB" id="8BWS">
    <property type="method" value="EM"/>
    <property type="resolution" value="3.20 A"/>
    <property type="chains" value="A=1-1460"/>
</dbReference>
<dbReference type="PDBsum" id="5FJ8"/>
<dbReference type="PDBsum" id="5FJ9"/>
<dbReference type="PDBsum" id="5FJA"/>
<dbReference type="PDBsum" id="6CNB"/>
<dbReference type="PDBsum" id="6CNC"/>
<dbReference type="PDBsum" id="6CND"/>
<dbReference type="PDBsum" id="6CNF"/>
<dbReference type="PDBsum" id="6EU0"/>
<dbReference type="PDBsum" id="6EU1"/>
<dbReference type="PDBsum" id="6EU2"/>
<dbReference type="PDBsum" id="6EU3"/>
<dbReference type="PDBsum" id="6F40"/>
<dbReference type="PDBsum" id="6F41"/>
<dbReference type="PDBsum" id="6F42"/>
<dbReference type="PDBsum" id="6F44"/>
<dbReference type="PDBsum" id="6TUT"/>
<dbReference type="PDBsum" id="7Z0H"/>
<dbReference type="PDBsum" id="7Z1L"/>
<dbReference type="PDBsum" id="7Z1M"/>
<dbReference type="PDBsum" id="7Z1N"/>
<dbReference type="PDBsum" id="7Z1O"/>
<dbReference type="PDBsum" id="7Z2Z"/>
<dbReference type="PDBsum" id="7Z30"/>
<dbReference type="PDBsum" id="7Z31"/>
<dbReference type="PDBsum" id="8BWS"/>
<dbReference type="EMDB" id="EMD-10595"/>
<dbReference type="EMDB" id="EMD-14421"/>
<dbReference type="EMDB" id="EMD-14447"/>
<dbReference type="EMDB" id="EMD-14448"/>
<dbReference type="EMDB" id="EMD-14449"/>
<dbReference type="EMDB" id="EMD-14451"/>
<dbReference type="EMDB" id="EMD-14468"/>
<dbReference type="EMDB" id="EMD-14469"/>
<dbReference type="EMDB" id="EMD-14470"/>
<dbReference type="EMDB" id="EMD-16299"/>
<dbReference type="EMDB" id="EMD-3178"/>
<dbReference type="EMDB" id="EMD-3179"/>
<dbReference type="EMDB" id="EMD-3180"/>
<dbReference type="EMDB" id="EMD-3955"/>
<dbReference type="EMDB" id="EMD-3956"/>
<dbReference type="EMDB" id="EMD-3957"/>
<dbReference type="EMDB" id="EMD-3958"/>
<dbReference type="EMDB" id="EMD-4180"/>
<dbReference type="EMDB" id="EMD-4181"/>
<dbReference type="EMDB" id="EMD-4182"/>
<dbReference type="EMDB" id="EMD-4183"/>
<dbReference type="EMDB" id="EMD-7530"/>
<dbReference type="EMDB" id="EMD-7531"/>
<dbReference type="EMDB" id="EMD-7532"/>
<dbReference type="EMDB" id="EMD-7533"/>
<dbReference type="SMR" id="P04051"/>
<dbReference type="BioGRID" id="34512">
    <property type="interactions" value="298"/>
</dbReference>
<dbReference type="ComplexPortal" id="CPX-2660">
    <property type="entry name" value="DNA-directed RNA polymerase III complex"/>
</dbReference>
<dbReference type="DIP" id="DIP-612N"/>
<dbReference type="FunCoup" id="P04051">
    <property type="interactions" value="1139"/>
</dbReference>
<dbReference type="IntAct" id="P04051">
    <property type="interactions" value="54"/>
</dbReference>
<dbReference type="MINT" id="P04051"/>
<dbReference type="STRING" id="4932.YOR116C"/>
<dbReference type="iPTMnet" id="P04051"/>
<dbReference type="PaxDb" id="4932-YOR116C"/>
<dbReference type="PeptideAtlas" id="P04051"/>
<dbReference type="EnsemblFungi" id="YOR116C_mRNA">
    <property type="protein sequence ID" value="YOR116C"/>
    <property type="gene ID" value="YOR116C"/>
</dbReference>
<dbReference type="GeneID" id="854283"/>
<dbReference type="KEGG" id="sce:YOR116C"/>
<dbReference type="AGR" id="SGD:S000005642"/>
<dbReference type="SGD" id="S000005642">
    <property type="gene designation" value="RPO31"/>
</dbReference>
<dbReference type="VEuPathDB" id="FungiDB:YOR116C"/>
<dbReference type="eggNOG" id="KOG0261">
    <property type="taxonomic scope" value="Eukaryota"/>
</dbReference>
<dbReference type="GeneTree" id="ENSGT00930000151028"/>
<dbReference type="HOGENOM" id="CLU_000487_3_0_1"/>
<dbReference type="InParanoid" id="P04051"/>
<dbReference type="OMA" id="AVCPPYN"/>
<dbReference type="OrthoDB" id="270392at2759"/>
<dbReference type="BioCyc" id="YEAST:G3O-33645-MONOMER"/>
<dbReference type="Reactome" id="R-SCE-76066">
    <property type="pathway name" value="RNA Polymerase III Transcription Initiation From Type 2 Promoter"/>
</dbReference>
<dbReference type="BioGRID-ORCS" id="854283">
    <property type="hits" value="0 hits in 10 CRISPR screens"/>
</dbReference>
<dbReference type="EvolutionaryTrace" id="P04051"/>
<dbReference type="PRO" id="PR:P04051"/>
<dbReference type="Proteomes" id="UP000002311">
    <property type="component" value="Chromosome XV"/>
</dbReference>
<dbReference type="RNAct" id="P04051">
    <property type="molecule type" value="protein"/>
</dbReference>
<dbReference type="GO" id="GO:0005739">
    <property type="term" value="C:mitochondrion"/>
    <property type="evidence" value="ECO:0007669"/>
    <property type="project" value="GOC"/>
</dbReference>
<dbReference type="GO" id="GO:0005654">
    <property type="term" value="C:nucleoplasm"/>
    <property type="evidence" value="ECO:0000304"/>
    <property type="project" value="Reactome"/>
</dbReference>
<dbReference type="GO" id="GO:0005634">
    <property type="term" value="C:nucleus"/>
    <property type="evidence" value="ECO:0000303"/>
    <property type="project" value="ComplexPortal"/>
</dbReference>
<dbReference type="GO" id="GO:0005666">
    <property type="term" value="C:RNA polymerase III complex"/>
    <property type="evidence" value="ECO:0000314"/>
    <property type="project" value="SGD"/>
</dbReference>
<dbReference type="GO" id="GO:0003677">
    <property type="term" value="F:DNA binding"/>
    <property type="evidence" value="ECO:0007669"/>
    <property type="project" value="InterPro"/>
</dbReference>
<dbReference type="GO" id="GO:0003899">
    <property type="term" value="F:DNA-directed RNA polymerase activity"/>
    <property type="evidence" value="ECO:0007669"/>
    <property type="project" value="UniProtKB-EC"/>
</dbReference>
<dbReference type="GO" id="GO:0046872">
    <property type="term" value="F:metal ion binding"/>
    <property type="evidence" value="ECO:0007669"/>
    <property type="project" value="UniProtKB-KW"/>
</dbReference>
<dbReference type="GO" id="GO:0006386">
    <property type="term" value="P:termination of RNA polymerase III transcription"/>
    <property type="evidence" value="ECO:0000314"/>
    <property type="project" value="ComplexPortal"/>
</dbReference>
<dbReference type="GO" id="GO:0006383">
    <property type="term" value="P:transcription by RNA polymerase III"/>
    <property type="evidence" value="ECO:0000314"/>
    <property type="project" value="ComplexPortal"/>
</dbReference>
<dbReference type="GO" id="GO:0006384">
    <property type="term" value="P:transcription initiation at RNA polymerase III promoter"/>
    <property type="evidence" value="ECO:0000314"/>
    <property type="project" value="ComplexPortal"/>
</dbReference>
<dbReference type="GO" id="GO:0042797">
    <property type="term" value="P:tRNA transcription by RNA polymerase III"/>
    <property type="evidence" value="ECO:0000314"/>
    <property type="project" value="SGD"/>
</dbReference>
<dbReference type="CDD" id="cd02736">
    <property type="entry name" value="RNAP_III_Rpc1_C"/>
    <property type="match status" value="1"/>
</dbReference>
<dbReference type="CDD" id="cd02583">
    <property type="entry name" value="RNAP_III_RPC1_N"/>
    <property type="match status" value="1"/>
</dbReference>
<dbReference type="FunFam" id="2.40.40.20:FF:000019">
    <property type="entry name" value="DNA-directed RNA polymerase II subunit RPB1"/>
    <property type="match status" value="1"/>
</dbReference>
<dbReference type="FunFam" id="1.10.132.30:FF:000001">
    <property type="entry name" value="DNA-directed RNA polymerase subunit"/>
    <property type="match status" value="1"/>
</dbReference>
<dbReference type="FunFam" id="1.10.150.390:FF:000004">
    <property type="entry name" value="DNA-directed RNA polymerase subunit"/>
    <property type="match status" value="1"/>
</dbReference>
<dbReference type="FunFam" id="1.10.274.100:FF:000005">
    <property type="entry name" value="DNA-directed RNA polymerase subunit"/>
    <property type="match status" value="1"/>
</dbReference>
<dbReference type="FunFam" id="2.40.40.20:FF:000018">
    <property type="entry name" value="DNA-directed RNA polymerase subunit"/>
    <property type="match status" value="1"/>
</dbReference>
<dbReference type="FunFam" id="3.30.1490.180:FF:000002">
    <property type="entry name" value="DNA-directed RNA polymerase subunit"/>
    <property type="match status" value="1"/>
</dbReference>
<dbReference type="FunFam" id="4.10.860.120:FF:000004">
    <property type="entry name" value="DNA-directed RNA polymerase subunit"/>
    <property type="match status" value="1"/>
</dbReference>
<dbReference type="Gene3D" id="1.10.132.30">
    <property type="match status" value="1"/>
</dbReference>
<dbReference type="Gene3D" id="1.10.150.390">
    <property type="match status" value="1"/>
</dbReference>
<dbReference type="Gene3D" id="2.40.40.20">
    <property type="match status" value="1"/>
</dbReference>
<dbReference type="Gene3D" id="6.10.250.2940">
    <property type="match status" value="1"/>
</dbReference>
<dbReference type="Gene3D" id="6.20.50.80">
    <property type="match status" value="1"/>
</dbReference>
<dbReference type="Gene3D" id="3.30.1490.180">
    <property type="entry name" value="RNA polymerase ii"/>
    <property type="match status" value="1"/>
</dbReference>
<dbReference type="Gene3D" id="4.10.860.120">
    <property type="entry name" value="RNA polymerase II, clamp domain"/>
    <property type="match status" value="1"/>
</dbReference>
<dbReference type="Gene3D" id="1.10.274.100">
    <property type="entry name" value="RNA polymerase Rpb1, domain 3"/>
    <property type="match status" value="1"/>
</dbReference>
<dbReference type="InterPro" id="IPR000722">
    <property type="entry name" value="RNA_pol_asu"/>
</dbReference>
<dbReference type="InterPro" id="IPR006592">
    <property type="entry name" value="RNA_pol_N"/>
</dbReference>
<dbReference type="InterPro" id="IPR007080">
    <property type="entry name" value="RNA_pol_Rpb1_1"/>
</dbReference>
<dbReference type="InterPro" id="IPR007066">
    <property type="entry name" value="RNA_pol_Rpb1_3"/>
</dbReference>
<dbReference type="InterPro" id="IPR042102">
    <property type="entry name" value="RNA_pol_Rpb1_3_sf"/>
</dbReference>
<dbReference type="InterPro" id="IPR007083">
    <property type="entry name" value="RNA_pol_Rpb1_4"/>
</dbReference>
<dbReference type="InterPro" id="IPR007081">
    <property type="entry name" value="RNA_pol_Rpb1_5"/>
</dbReference>
<dbReference type="InterPro" id="IPR044893">
    <property type="entry name" value="RNA_pol_Rpb1_clamp_domain"/>
</dbReference>
<dbReference type="InterPro" id="IPR035698">
    <property type="entry name" value="RNAP_III_Rpc1_C"/>
</dbReference>
<dbReference type="InterPro" id="IPR035697">
    <property type="entry name" value="RNAP_III_RPC1_N"/>
</dbReference>
<dbReference type="InterPro" id="IPR038120">
    <property type="entry name" value="Rpb1_funnel_sf"/>
</dbReference>
<dbReference type="InterPro" id="IPR015700">
    <property type="entry name" value="RPC1"/>
</dbReference>
<dbReference type="NCBIfam" id="NF006336">
    <property type="entry name" value="PRK08566.1"/>
    <property type="match status" value="1"/>
</dbReference>
<dbReference type="PANTHER" id="PTHR48446">
    <property type="entry name" value="DNA-DIRECTED RNA POLYMERASE SUBUNIT BETA' N-TERMINAL SECTION"/>
    <property type="match status" value="1"/>
</dbReference>
<dbReference type="PANTHER" id="PTHR48446:SF1">
    <property type="entry name" value="DNA-DIRECTED RNA POLYMERASE SUBUNIT BETA' N-TERMINAL SECTION"/>
    <property type="match status" value="1"/>
</dbReference>
<dbReference type="Pfam" id="PF04997">
    <property type="entry name" value="RNA_pol_Rpb1_1"/>
    <property type="match status" value="1"/>
</dbReference>
<dbReference type="Pfam" id="PF00623">
    <property type="entry name" value="RNA_pol_Rpb1_2"/>
    <property type="match status" value="1"/>
</dbReference>
<dbReference type="Pfam" id="PF04983">
    <property type="entry name" value="RNA_pol_Rpb1_3"/>
    <property type="match status" value="1"/>
</dbReference>
<dbReference type="Pfam" id="PF05000">
    <property type="entry name" value="RNA_pol_Rpb1_4"/>
    <property type="match status" value="1"/>
</dbReference>
<dbReference type="Pfam" id="PF04998">
    <property type="entry name" value="RNA_pol_Rpb1_5"/>
    <property type="match status" value="1"/>
</dbReference>
<dbReference type="SMART" id="SM00663">
    <property type="entry name" value="RPOLA_N"/>
    <property type="match status" value="1"/>
</dbReference>
<dbReference type="SUPFAM" id="SSF64484">
    <property type="entry name" value="beta and beta-prime subunits of DNA dependent RNA-polymerase"/>
    <property type="match status" value="1"/>
</dbReference>
<feature type="chain" id="PRO_0000073953" description="DNA-directed RNA polymerase III subunit RPC1">
    <location>
        <begin position="1"/>
        <end position="1460"/>
    </location>
</feature>
<feature type="region of interest" description="Bridging helix" evidence="1">
    <location>
        <begin position="858"/>
        <end position="870"/>
    </location>
</feature>
<feature type="binding site" evidence="1">
    <location>
        <position position="67"/>
    </location>
    <ligand>
        <name>Zn(2+)</name>
        <dbReference type="ChEBI" id="CHEBI:29105"/>
        <label>1</label>
    </ligand>
</feature>
<feature type="binding site" evidence="1">
    <location>
        <position position="70"/>
    </location>
    <ligand>
        <name>Zn(2+)</name>
        <dbReference type="ChEBI" id="CHEBI:29105"/>
        <label>1</label>
    </ligand>
</feature>
<feature type="binding site" evidence="1">
    <location>
        <position position="77"/>
    </location>
    <ligand>
        <name>Zn(2+)</name>
        <dbReference type="ChEBI" id="CHEBI:29105"/>
        <label>1</label>
    </ligand>
</feature>
<feature type="binding site" evidence="1">
    <location>
        <position position="80"/>
    </location>
    <ligand>
        <name>Zn(2+)</name>
        <dbReference type="ChEBI" id="CHEBI:29105"/>
        <label>1</label>
    </ligand>
</feature>
<feature type="binding site" evidence="1">
    <location>
        <position position="107"/>
    </location>
    <ligand>
        <name>Zn(2+)</name>
        <dbReference type="ChEBI" id="CHEBI:29105"/>
        <label>2</label>
    </ligand>
</feature>
<feature type="binding site" evidence="1">
    <location>
        <position position="110"/>
    </location>
    <ligand>
        <name>Zn(2+)</name>
        <dbReference type="ChEBI" id="CHEBI:29105"/>
        <label>2</label>
    </ligand>
</feature>
<feature type="binding site" evidence="1">
    <location>
        <position position="154"/>
    </location>
    <ligand>
        <name>Zn(2+)</name>
        <dbReference type="ChEBI" id="CHEBI:29105"/>
        <label>2</label>
    </ligand>
</feature>
<feature type="binding site" evidence="1">
    <location>
        <position position="511"/>
    </location>
    <ligand>
        <name>Mg(2+)</name>
        <dbReference type="ChEBI" id="CHEBI:18420"/>
        <note>catalytic</note>
    </ligand>
</feature>
<feature type="binding site" evidence="1">
    <location>
        <position position="513"/>
    </location>
    <ligand>
        <name>Mg(2+)</name>
        <dbReference type="ChEBI" id="CHEBI:18420"/>
        <note>catalytic</note>
    </ligand>
</feature>
<feature type="binding site" evidence="1">
    <location>
        <position position="515"/>
    </location>
    <ligand>
        <name>Mg(2+)</name>
        <dbReference type="ChEBI" id="CHEBI:18420"/>
        <note>catalytic</note>
    </ligand>
</feature>
<feature type="mutagenesis site" description="Temperature-sensitive.">
    <original>T</original>
    <variation>I</variation>
    <location>
        <position position="506"/>
    </location>
</feature>
<feature type="mutagenesis site" description="Temperature-sensitive.">
    <original>N</original>
    <variation>Y</variation>
    <location>
        <position position="509"/>
    </location>
</feature>
<feature type="mutagenesis site" description="Temperature-sensitive.">
    <original>N</original>
    <variation>Q</variation>
    <location>
        <position position="518"/>
    </location>
</feature>
<feature type="strand" evidence="8">
    <location>
        <begin position="11"/>
        <end position="20"/>
    </location>
</feature>
<feature type="helix" evidence="8">
    <location>
        <begin position="23"/>
        <end position="29"/>
    </location>
</feature>
<feature type="strand" evidence="8">
    <location>
        <begin position="31"/>
        <end position="33"/>
    </location>
</feature>
<feature type="helix" evidence="8">
    <location>
        <begin position="42"/>
        <end position="44"/>
    </location>
</feature>
<feature type="strand" evidence="9">
    <location>
        <begin position="50"/>
        <end position="52"/>
    </location>
</feature>
<feature type="helix" evidence="8">
    <location>
        <begin position="56"/>
        <end position="58"/>
    </location>
</feature>
<feature type="strand" evidence="9">
    <location>
        <begin position="61"/>
        <end position="64"/>
    </location>
</feature>
<feature type="strand" evidence="8">
    <location>
        <begin position="68"/>
        <end position="70"/>
    </location>
</feature>
<feature type="turn" evidence="8">
    <location>
        <begin position="74"/>
        <end position="76"/>
    </location>
</feature>
<feature type="strand" evidence="8">
    <location>
        <begin position="82"/>
        <end position="85"/>
    </location>
</feature>
<feature type="helix" evidence="8">
    <location>
        <begin position="96"/>
        <end position="103"/>
    </location>
</feature>
<feature type="strand" evidence="5">
    <location>
        <begin position="104"/>
        <end position="106"/>
    </location>
</feature>
<feature type="turn" evidence="8">
    <location>
        <begin position="108"/>
        <end position="110"/>
    </location>
</feature>
<feature type="strand" evidence="8">
    <location>
        <begin position="113"/>
        <end position="115"/>
    </location>
</feature>
<feature type="turn" evidence="8">
    <location>
        <begin position="117"/>
        <end position="119"/>
    </location>
</feature>
<feature type="helix" evidence="8">
    <location>
        <begin position="121"/>
        <end position="127"/>
    </location>
</feature>
<feature type="strand" evidence="7">
    <location>
        <begin position="128"/>
        <end position="130"/>
    </location>
</feature>
<feature type="helix" evidence="8">
    <location>
        <begin position="134"/>
        <end position="150"/>
    </location>
</feature>
<feature type="strand" evidence="8">
    <location>
        <begin position="155"/>
        <end position="157"/>
    </location>
</feature>
<feature type="strand" evidence="9">
    <location>
        <begin position="163"/>
        <end position="167"/>
    </location>
</feature>
<feature type="helix" evidence="9">
    <location>
        <begin position="173"/>
        <end position="175"/>
    </location>
</feature>
<feature type="strand" evidence="8">
    <location>
        <begin position="178"/>
        <end position="180"/>
    </location>
</feature>
<feature type="strand" evidence="5">
    <location>
        <begin position="182"/>
        <end position="185"/>
    </location>
</feature>
<feature type="strand" evidence="9">
    <location>
        <begin position="187"/>
        <end position="189"/>
    </location>
</feature>
<feature type="helix" evidence="8">
    <location>
        <begin position="192"/>
        <end position="205"/>
    </location>
</feature>
<feature type="helix" evidence="8">
    <location>
        <begin position="211"/>
        <end position="214"/>
    </location>
</feature>
<feature type="strand" evidence="9">
    <location>
        <begin position="215"/>
        <end position="217"/>
    </location>
</feature>
<feature type="strand" evidence="8">
    <location>
        <begin position="220"/>
        <end position="222"/>
    </location>
</feature>
<feature type="helix" evidence="8">
    <location>
        <begin position="224"/>
        <end position="233"/>
    </location>
</feature>
<feature type="helix" evidence="9">
    <location>
        <begin position="236"/>
        <end position="238"/>
    </location>
</feature>
<feature type="helix" evidence="8">
    <location>
        <begin position="239"/>
        <end position="242"/>
    </location>
</feature>
<feature type="strand" evidence="6">
    <location>
        <begin position="248"/>
        <end position="250"/>
    </location>
</feature>
<feature type="turn" evidence="8">
    <location>
        <begin position="253"/>
        <end position="256"/>
    </location>
</feature>
<feature type="strand" evidence="8">
    <location>
        <begin position="260"/>
        <end position="263"/>
    </location>
</feature>
<feature type="turn" evidence="8">
    <location>
        <begin position="266"/>
        <end position="268"/>
    </location>
</feature>
<feature type="strand" evidence="8">
    <location>
        <begin position="273"/>
        <end position="279"/>
    </location>
</feature>
<feature type="helix" evidence="8">
    <location>
        <begin position="284"/>
        <end position="305"/>
    </location>
</feature>
<feature type="helix" evidence="8">
    <location>
        <begin position="309"/>
        <end position="327"/>
    </location>
</feature>
<feature type="strand" evidence="5">
    <location>
        <begin position="346"/>
        <end position="349"/>
    </location>
</feature>
<feature type="helix" evidence="8">
    <location>
        <begin position="353"/>
        <end position="357"/>
    </location>
</feature>
<feature type="strand" evidence="8">
    <location>
        <begin position="358"/>
        <end position="363"/>
    </location>
</feature>
<feature type="helix" evidence="8">
    <location>
        <begin position="364"/>
        <end position="367"/>
    </location>
</feature>
<feature type="strand" evidence="8">
    <location>
        <begin position="369"/>
        <end position="383"/>
    </location>
</feature>
<feature type="strand" evidence="7">
    <location>
        <begin position="385"/>
        <end position="387"/>
    </location>
</feature>
<feature type="strand" evidence="8">
    <location>
        <begin position="391"/>
        <end position="395"/>
    </location>
</feature>
<feature type="helix" evidence="8">
    <location>
        <begin position="396"/>
        <end position="399"/>
    </location>
</feature>
<feature type="strand" evidence="8">
    <location>
        <begin position="402"/>
        <end position="407"/>
    </location>
</feature>
<feature type="turn" evidence="8">
    <location>
        <begin position="410"/>
        <end position="412"/>
    </location>
</feature>
<feature type="helix" evidence="8">
    <location>
        <begin position="413"/>
        <end position="422"/>
    </location>
</feature>
<feature type="turn" evidence="8">
    <location>
        <begin position="423"/>
        <end position="425"/>
    </location>
</feature>
<feature type="strand" evidence="8">
    <location>
        <begin position="426"/>
        <end position="434"/>
    </location>
</feature>
<feature type="strand" evidence="8">
    <location>
        <begin position="439"/>
        <end position="443"/>
    </location>
</feature>
<feature type="turn" evidence="5">
    <location>
        <begin position="444"/>
        <end position="446"/>
    </location>
</feature>
<feature type="helix" evidence="8">
    <location>
        <begin position="449"/>
        <end position="455"/>
    </location>
</feature>
<feature type="strand" evidence="8">
    <location>
        <begin position="461"/>
        <end position="465"/>
    </location>
</feature>
<feature type="strand" evidence="8">
    <location>
        <begin position="471"/>
        <end position="475"/>
    </location>
</feature>
<feature type="helix" evidence="8">
    <location>
        <begin position="482"/>
        <end position="484"/>
    </location>
</feature>
<feature type="strand" evidence="8">
    <location>
        <begin position="485"/>
        <end position="500"/>
    </location>
</feature>
<feature type="helix" evidence="8">
    <location>
        <begin position="502"/>
        <end position="504"/>
    </location>
</feature>
<feature type="helix" evidence="8">
    <location>
        <begin position="505"/>
        <end position="508"/>
    </location>
</feature>
<feature type="strand" evidence="8">
    <location>
        <begin position="512"/>
        <end position="514"/>
    </location>
</feature>
<feature type="strand" evidence="8">
    <location>
        <begin position="516"/>
        <end position="520"/>
    </location>
</feature>
<feature type="helix" evidence="8">
    <location>
        <begin position="525"/>
        <end position="534"/>
    </location>
</feature>
<feature type="strand" evidence="8">
    <location>
        <begin position="535"/>
        <end position="537"/>
    </location>
</feature>
<feature type="helix" evidence="8">
    <location>
        <begin position="538"/>
        <end position="540"/>
    </location>
</feature>
<feature type="turn" evidence="8">
    <location>
        <begin position="544"/>
        <end position="546"/>
    </location>
</feature>
<feature type="helix" evidence="8">
    <location>
        <begin position="555"/>
        <end position="565"/>
    </location>
</feature>
<feature type="helix" evidence="8">
    <location>
        <begin position="573"/>
        <end position="583"/>
    </location>
</feature>
<feature type="strand" evidence="8">
    <location>
        <begin position="596"/>
        <end position="601"/>
    </location>
</feature>
<feature type="strand" evidence="8">
    <location>
        <begin position="603"/>
        <end position="605"/>
    </location>
</feature>
<feature type="helix" evidence="8">
    <location>
        <begin position="606"/>
        <end position="614"/>
    </location>
</feature>
<feature type="strand" evidence="9">
    <location>
        <begin position="617"/>
        <end position="619"/>
    </location>
</feature>
<feature type="strand" evidence="8">
    <location>
        <begin position="626"/>
        <end position="629"/>
    </location>
</feature>
<feature type="strand" evidence="9">
    <location>
        <begin position="637"/>
        <end position="641"/>
    </location>
</feature>
<feature type="helix" evidence="8">
    <location>
        <begin position="643"/>
        <end position="645"/>
    </location>
</feature>
<feature type="strand" evidence="8">
    <location>
        <begin position="647"/>
        <end position="649"/>
    </location>
</feature>
<feature type="strand" evidence="8">
    <location>
        <begin position="651"/>
        <end position="655"/>
    </location>
</feature>
<feature type="strand" evidence="8">
    <location>
        <begin position="658"/>
        <end position="661"/>
    </location>
</feature>
<feature type="helix" evidence="8">
    <location>
        <begin position="666"/>
        <end position="669"/>
    </location>
</feature>
<feature type="strand" evidence="8">
    <location>
        <begin position="670"/>
        <end position="672"/>
    </location>
</feature>
<feature type="helix" evidence="8">
    <location>
        <begin position="677"/>
        <end position="685"/>
    </location>
</feature>
<feature type="helix" evidence="8">
    <location>
        <begin position="687"/>
        <end position="708"/>
    </location>
</feature>
<feature type="helix" evidence="8">
    <location>
        <begin position="714"/>
        <end position="716"/>
    </location>
</feature>
<feature type="helix" evidence="8">
    <location>
        <begin position="721"/>
        <end position="747"/>
    </location>
</feature>
<feature type="strand" evidence="9">
    <location>
        <begin position="754"/>
        <end position="756"/>
    </location>
</feature>
<feature type="helix" evidence="8">
    <location>
        <begin position="758"/>
        <end position="784"/>
    </location>
</feature>
<feature type="helix" evidence="8">
    <location>
        <begin position="790"/>
        <end position="797"/>
    </location>
</feature>
<feature type="strand" evidence="8">
    <location>
        <begin position="798"/>
        <end position="800"/>
    </location>
</feature>
<feature type="helix" evidence="8">
    <location>
        <begin position="803"/>
        <end position="810"/>
    </location>
</feature>
<feature type="strand" evidence="8">
    <location>
        <begin position="813"/>
        <end position="815"/>
    </location>
</feature>
<feature type="strand" evidence="6">
    <location>
        <begin position="818"/>
        <end position="821"/>
    </location>
</feature>
<feature type="strand" evidence="6">
    <location>
        <begin position="826"/>
        <end position="829"/>
    </location>
</feature>
<feature type="strand" evidence="9">
    <location>
        <begin position="830"/>
        <end position="832"/>
    </location>
</feature>
<feature type="helix" evidence="8">
    <location>
        <begin position="843"/>
        <end position="845"/>
    </location>
</feature>
<feature type="turn" evidence="8">
    <location>
        <begin position="852"/>
        <end position="854"/>
    </location>
</feature>
<feature type="helix" evidence="8">
    <location>
        <begin position="858"/>
        <end position="880"/>
    </location>
</feature>
<feature type="helix" evidence="8">
    <location>
        <begin position="885"/>
        <end position="893"/>
    </location>
</feature>
<feature type="strand" evidence="9">
    <location>
        <begin position="904"/>
        <end position="906"/>
    </location>
</feature>
<feature type="strand" evidence="8">
    <location>
        <begin position="911"/>
        <end position="915"/>
    </location>
</feature>
<feature type="helix" evidence="8">
    <location>
        <begin position="916"/>
        <end position="918"/>
    </location>
</feature>
<feature type="helix" evidence="8">
    <location>
        <begin position="923"/>
        <end position="925"/>
    </location>
</feature>
<feature type="strand" evidence="8">
    <location>
        <begin position="928"/>
        <end position="932"/>
    </location>
</feature>
<feature type="helix" evidence="8">
    <location>
        <begin position="935"/>
        <end position="945"/>
    </location>
</feature>
<feature type="strand" evidence="8">
    <location>
        <begin position="949"/>
        <end position="951"/>
    </location>
</feature>
<feature type="helix" evidence="8">
    <location>
        <begin position="956"/>
        <end position="966"/>
    </location>
</feature>
<feature type="helix" evidence="8">
    <location>
        <begin position="969"/>
        <end position="973"/>
    </location>
</feature>
<feature type="strand" evidence="8">
    <location>
        <begin position="979"/>
        <end position="981"/>
    </location>
</feature>
<feature type="strand" evidence="8">
    <location>
        <begin position="986"/>
        <end position="988"/>
    </location>
</feature>
<feature type="strand" evidence="8">
    <location>
        <begin position="991"/>
        <end position="994"/>
    </location>
</feature>
<feature type="helix" evidence="8">
    <location>
        <begin position="999"/>
        <end position="1025"/>
    </location>
</feature>
<feature type="helix" evidence="8">
    <location>
        <begin position="1038"/>
        <end position="1040"/>
    </location>
</feature>
<feature type="strand" evidence="7">
    <location>
        <begin position="1041"/>
        <end position="1043"/>
    </location>
</feature>
<feature type="turn" evidence="8">
    <location>
        <begin position="1044"/>
        <end position="1047"/>
    </location>
</feature>
<feature type="helix" evidence="8">
    <location>
        <begin position="1052"/>
        <end position="1059"/>
    </location>
</feature>
<feature type="helix" evidence="8">
    <location>
        <begin position="1064"/>
        <end position="1081"/>
    </location>
</feature>
<feature type="helix" evidence="8">
    <location>
        <begin position="1089"/>
        <end position="1098"/>
    </location>
</feature>
<feature type="helix" evidence="8">
    <location>
        <begin position="1100"/>
        <end position="1103"/>
    </location>
</feature>
<feature type="strand" evidence="9">
    <location>
        <begin position="1114"/>
        <end position="1118"/>
    </location>
</feature>
<feature type="helix" evidence="8">
    <location>
        <begin position="1123"/>
        <end position="1131"/>
    </location>
</feature>
<feature type="strand" evidence="8">
    <location>
        <begin position="1141"/>
        <end position="1146"/>
    </location>
</feature>
<feature type="turn" evidence="8">
    <location>
        <begin position="1150"/>
        <end position="1153"/>
    </location>
</feature>
<feature type="helix" evidence="8">
    <location>
        <begin position="1154"/>
        <end position="1160"/>
    </location>
</feature>
<feature type="helix" evidence="8">
    <location>
        <begin position="1166"/>
        <end position="1170"/>
    </location>
</feature>
<feature type="strand" evidence="8">
    <location>
        <begin position="1171"/>
        <end position="1173"/>
    </location>
</feature>
<feature type="strand" evidence="6">
    <location>
        <begin position="1176"/>
        <end position="1178"/>
    </location>
</feature>
<feature type="strand" evidence="5">
    <location>
        <begin position="1179"/>
        <end position="1181"/>
    </location>
</feature>
<feature type="strand" evidence="8">
    <location>
        <begin position="1182"/>
        <end position="1187"/>
    </location>
</feature>
<feature type="helix" evidence="8">
    <location>
        <begin position="1190"/>
        <end position="1195"/>
    </location>
</feature>
<feature type="helix" evidence="8">
    <location>
        <begin position="1203"/>
        <end position="1216"/>
    </location>
</feature>
<feature type="helix" evidence="7">
    <location>
        <begin position="1219"/>
        <end position="1221"/>
    </location>
</feature>
<feature type="strand" evidence="8">
    <location>
        <begin position="1222"/>
        <end position="1224"/>
    </location>
</feature>
<feature type="turn" evidence="7">
    <location>
        <begin position="1226"/>
        <end position="1228"/>
    </location>
</feature>
<feature type="strand" evidence="8">
    <location>
        <begin position="1229"/>
        <end position="1233"/>
    </location>
</feature>
<feature type="helix" evidence="5">
    <location>
        <begin position="1237"/>
        <end position="1243"/>
    </location>
</feature>
<feature type="turn" evidence="5">
    <location>
        <begin position="1244"/>
        <end position="1246"/>
    </location>
</feature>
<feature type="strand" evidence="5">
    <location>
        <begin position="1248"/>
        <end position="1250"/>
    </location>
</feature>
<feature type="helix" evidence="5">
    <location>
        <begin position="1251"/>
        <end position="1254"/>
    </location>
</feature>
<feature type="helix" evidence="8">
    <location>
        <begin position="1255"/>
        <end position="1266"/>
    </location>
</feature>
<feature type="strand" evidence="8">
    <location>
        <begin position="1267"/>
        <end position="1269"/>
    </location>
</feature>
<feature type="strand" evidence="8">
    <location>
        <begin position="1272"/>
        <end position="1274"/>
    </location>
</feature>
<feature type="strand" evidence="8">
    <location>
        <begin position="1281"/>
        <end position="1285"/>
    </location>
</feature>
<feature type="strand" evidence="8">
    <location>
        <begin position="1287"/>
        <end position="1289"/>
    </location>
</feature>
<feature type="strand" evidence="8">
    <location>
        <begin position="1291"/>
        <end position="1295"/>
    </location>
</feature>
<feature type="helix" evidence="8">
    <location>
        <begin position="1300"/>
        <end position="1305"/>
    </location>
</feature>
<feature type="strand" evidence="8">
    <location>
        <begin position="1309"/>
        <end position="1317"/>
    </location>
</feature>
<feature type="helix" evidence="8">
    <location>
        <begin position="1319"/>
        <end position="1325"/>
    </location>
</feature>
<feature type="helix" evidence="8">
    <location>
        <begin position="1328"/>
        <end position="1344"/>
    </location>
</feature>
<feature type="turn" evidence="8">
    <location>
        <begin position="1345"/>
        <end position="1347"/>
    </location>
</feature>
<feature type="helix" evidence="8">
    <location>
        <begin position="1352"/>
        <end position="1363"/>
    </location>
</feature>
<feature type="strand" evidence="9">
    <location>
        <begin position="1364"/>
        <end position="1367"/>
    </location>
</feature>
<feature type="strand" evidence="7">
    <location>
        <begin position="1370"/>
        <end position="1372"/>
    </location>
</feature>
<feature type="turn" evidence="8">
    <location>
        <begin position="1373"/>
        <end position="1379"/>
    </location>
</feature>
<feature type="helix" evidence="8">
    <location>
        <begin position="1383"/>
        <end position="1389"/>
    </location>
</feature>
<feature type="helix" evidence="8">
    <location>
        <begin position="1392"/>
        <end position="1401"/>
    </location>
</feature>
<feature type="helix" evidence="8">
    <location>
        <begin position="1411"/>
        <end position="1417"/>
    </location>
</feature>
<feature type="helix" evidence="8">
    <location>
        <begin position="1424"/>
        <end position="1426"/>
    </location>
</feature>
<feature type="strand" evidence="8">
    <location>
        <begin position="1427"/>
        <end position="1432"/>
    </location>
</feature>
<feature type="strand" evidence="8">
    <location>
        <begin position="1438"/>
        <end position="1441"/>
    </location>
</feature>
<feature type="helix" evidence="8">
    <location>
        <begin position="1448"/>
        <end position="1455"/>
    </location>
</feature>
<keyword id="KW-0002">3D-structure</keyword>
<keyword id="KW-0240">DNA-directed RNA polymerase</keyword>
<keyword id="KW-0460">Magnesium</keyword>
<keyword id="KW-0479">Metal-binding</keyword>
<keyword id="KW-0548">Nucleotidyltransferase</keyword>
<keyword id="KW-0539">Nucleus</keyword>
<keyword id="KW-1185">Reference proteome</keyword>
<keyword id="KW-0804">Transcription</keyword>
<keyword id="KW-0808">Transferase</keyword>
<keyword id="KW-0862">Zinc</keyword>
<reference key="1">
    <citation type="journal article" date="1985" name="Cell">
        <title>Extensive homology among the largest subunits of eukaryotic and prokaryotic RNA polymerases.</title>
        <authorList>
            <person name="Allison L.A."/>
            <person name="Moyle M."/>
            <person name="Shales M."/>
            <person name="Ingles C.J."/>
        </authorList>
    </citation>
    <scope>NUCLEOTIDE SEQUENCE [GENOMIC DNA]</scope>
</reference>
<reference key="2">
    <citation type="journal article" date="1996" name="Yeast">
        <title>Sequencing and analysis of 51 kb on the right arm of chromosome XV from Saccharomyces cerevisiae reveals 30 open reading frames.</title>
        <authorList>
            <person name="Wiemann S."/>
            <person name="Rechmann S."/>
            <person name="Benes V."/>
            <person name="Voss H."/>
            <person name="Schwager C."/>
            <person name="Vlcek C."/>
            <person name="Stegemann J."/>
            <person name="Zimmermann J."/>
            <person name="Erfle H."/>
            <person name="Paces V."/>
            <person name="Ansorge W."/>
        </authorList>
    </citation>
    <scope>NUCLEOTIDE SEQUENCE [GENOMIC DNA]</scope>
    <source>
        <strain>ATCC 96604 / S288c / FY1679</strain>
    </source>
</reference>
<reference key="3">
    <citation type="journal article" date="1997" name="Yeast">
        <title>DNA sequencing and analysis of 130 kb from yeast chromosome XV.</title>
        <authorList>
            <person name="Voss H."/>
            <person name="Benes V."/>
            <person name="Andrade M.A."/>
            <person name="Valencia A."/>
            <person name="Rechmann S."/>
            <person name="Teodoru C."/>
            <person name="Schwager C."/>
            <person name="Paces V."/>
            <person name="Sander C."/>
            <person name="Ansorge W."/>
        </authorList>
    </citation>
    <scope>NUCLEOTIDE SEQUENCE [GENOMIC DNA]</scope>
</reference>
<reference key="4">
    <citation type="journal article" date="1997" name="Nature">
        <title>The nucleotide sequence of Saccharomyces cerevisiae chromosome XV.</title>
        <authorList>
            <person name="Dujon B."/>
            <person name="Albermann K."/>
            <person name="Aldea M."/>
            <person name="Alexandraki D."/>
            <person name="Ansorge W."/>
            <person name="Arino J."/>
            <person name="Benes V."/>
            <person name="Bohn C."/>
            <person name="Bolotin-Fukuhara M."/>
            <person name="Bordonne R."/>
            <person name="Boyer J."/>
            <person name="Camasses A."/>
            <person name="Casamayor A."/>
            <person name="Casas C."/>
            <person name="Cheret G."/>
            <person name="Cziepluch C."/>
            <person name="Daignan-Fornier B."/>
            <person name="Dang V.-D."/>
            <person name="de Haan M."/>
            <person name="Delius H."/>
            <person name="Durand P."/>
            <person name="Fairhead C."/>
            <person name="Feldmann H."/>
            <person name="Gaillon L."/>
            <person name="Galisson F."/>
            <person name="Gamo F.-J."/>
            <person name="Gancedo C."/>
            <person name="Goffeau A."/>
            <person name="Goulding S.E."/>
            <person name="Grivell L.A."/>
            <person name="Habbig B."/>
            <person name="Hand N.J."/>
            <person name="Hani J."/>
            <person name="Hattenhorst U."/>
            <person name="Hebling U."/>
            <person name="Hernando Y."/>
            <person name="Herrero E."/>
            <person name="Heumann K."/>
            <person name="Hiesel R."/>
            <person name="Hilger F."/>
            <person name="Hofmann B."/>
            <person name="Hollenberg C.P."/>
            <person name="Hughes B."/>
            <person name="Jauniaux J.-C."/>
            <person name="Kalogeropoulos A."/>
            <person name="Katsoulou C."/>
            <person name="Kordes E."/>
            <person name="Lafuente M.J."/>
            <person name="Landt O."/>
            <person name="Louis E.J."/>
            <person name="Maarse A.C."/>
            <person name="Madania A."/>
            <person name="Mannhaupt G."/>
            <person name="Marck C."/>
            <person name="Martin R.P."/>
            <person name="Mewes H.-W."/>
            <person name="Michaux G."/>
            <person name="Paces V."/>
            <person name="Parle-McDermott A.G."/>
            <person name="Pearson B.M."/>
            <person name="Perrin A."/>
            <person name="Pettersson B."/>
            <person name="Poch O."/>
            <person name="Pohl T.M."/>
            <person name="Poirey R."/>
            <person name="Portetelle D."/>
            <person name="Pujol A."/>
            <person name="Purnelle B."/>
            <person name="Ramezani Rad M."/>
            <person name="Rechmann S."/>
            <person name="Schwager C."/>
            <person name="Schweizer M."/>
            <person name="Sor F."/>
            <person name="Sterky F."/>
            <person name="Tarassov I.A."/>
            <person name="Teodoru C."/>
            <person name="Tettelin H."/>
            <person name="Thierry A."/>
            <person name="Tobiasch E."/>
            <person name="Tzermia M."/>
            <person name="Uhlen M."/>
            <person name="Unseld M."/>
            <person name="Valens M."/>
            <person name="Vandenbol M."/>
            <person name="Vetter I."/>
            <person name="Vlcek C."/>
            <person name="Voet M."/>
            <person name="Volckaert G."/>
            <person name="Voss H."/>
            <person name="Wambutt R."/>
            <person name="Wedler H."/>
            <person name="Wiemann S."/>
            <person name="Winsor B."/>
            <person name="Wolfe K.H."/>
            <person name="Zollner A."/>
            <person name="Zumstein E."/>
            <person name="Kleine K."/>
        </authorList>
    </citation>
    <scope>NUCLEOTIDE SEQUENCE [LARGE SCALE GENOMIC DNA]</scope>
    <source>
        <strain>ATCC 204508 / S288c</strain>
    </source>
</reference>
<reference key="5">
    <citation type="journal article" date="2014" name="G3 (Bethesda)">
        <title>The reference genome sequence of Saccharomyces cerevisiae: Then and now.</title>
        <authorList>
            <person name="Engel S.R."/>
            <person name="Dietrich F.S."/>
            <person name="Fisk D.G."/>
            <person name="Binkley G."/>
            <person name="Balakrishnan R."/>
            <person name="Costanzo M.C."/>
            <person name="Dwight S.S."/>
            <person name="Hitz B.C."/>
            <person name="Karra K."/>
            <person name="Nash R.S."/>
            <person name="Weng S."/>
            <person name="Wong E.D."/>
            <person name="Lloyd P."/>
            <person name="Skrzypek M.S."/>
            <person name="Miyasato S.R."/>
            <person name="Simison M."/>
            <person name="Cherry J.M."/>
        </authorList>
    </citation>
    <scope>GENOME REANNOTATION</scope>
    <source>
        <strain>ATCC 204508 / S288c</strain>
    </source>
</reference>
<reference key="6">
    <citation type="journal article" date="1994" name="Mol. Cell. Biol.">
        <title>Suppression of yeast RNA polymerase III mutations by FHL1, a gene coding for a fork head protein involved in rRNA processing.</title>
        <authorList>
            <person name="Hermann-Ledenmat S."/>
            <person name="Werner M."/>
            <person name="Sentenac A."/>
            <person name="Thuriaux P."/>
        </authorList>
    </citation>
    <scope>MUTAGENESIS</scope>
</reference>
<reference key="7">
    <citation type="journal article" date="1996" name="EMBO J.">
        <title>Mutations in the alpha-amanitin conserved domain of the largest subunit of yeast RNA polymerase III affect pausing, RNA cleavage and transcriptional transitions.</title>
        <authorList>
            <person name="Thuillier V."/>
            <person name="Brun I."/>
            <person name="Sentenac A."/>
            <person name="Werner M."/>
        </authorList>
    </citation>
    <scope>MUTAGENESIS</scope>
</reference>
<reference key="8">
    <citation type="journal article" date="1998" name="Cold Spring Harb. Symp. Quant. Biol.">
        <title>The yeast RNA polymerase III transcription machinery: a paradigm for eukaryotic gene activation.</title>
        <authorList>
            <person name="Chedin S."/>
            <person name="Ferri M.L."/>
            <person name="Peyroche G."/>
            <person name="Andrau J.-C."/>
            <person name="Jourdain S."/>
            <person name="Lefebvre O."/>
            <person name="Werner M."/>
            <person name="Carles C."/>
            <person name="Sentenac A."/>
        </authorList>
    </citation>
    <scope>REVIEW ON THE RNA POL III COMPLEX</scope>
</reference>
<reference key="9">
    <citation type="journal article" date="2003" name="Nature">
        <title>Global analysis of protein localization in budding yeast.</title>
        <authorList>
            <person name="Huh W.-K."/>
            <person name="Falvo J.V."/>
            <person name="Gerke L.C."/>
            <person name="Carroll A.S."/>
            <person name="Howson R.W."/>
            <person name="Weissman J.S."/>
            <person name="O'Shea E.K."/>
        </authorList>
    </citation>
    <scope>SUBCELLULAR LOCATION [LARGE SCALE ANALYSIS]</scope>
</reference>
<reference key="10">
    <citation type="journal article" date="2003" name="Nature">
        <title>Global analysis of protein expression in yeast.</title>
        <authorList>
            <person name="Ghaemmaghami S."/>
            <person name="Huh W.-K."/>
            <person name="Bower K."/>
            <person name="Howson R.W."/>
            <person name="Belle A."/>
            <person name="Dephoure N."/>
            <person name="O'Shea E.K."/>
            <person name="Weissman J.S."/>
        </authorList>
    </citation>
    <scope>LEVEL OF PROTEIN EXPRESSION [LARGE SCALE ANALYSIS]</scope>
</reference>
<reference key="11">
    <citation type="journal article" date="2012" name="Proc. Natl. Acad. Sci. U.S.A.">
        <title>N-terminal acetylome analyses and functional insights of the N-terminal acetyltransferase NatB.</title>
        <authorList>
            <person name="Van Damme P."/>
            <person name="Lasa M."/>
            <person name="Polevoda B."/>
            <person name="Gazquez C."/>
            <person name="Elosegui-Artola A."/>
            <person name="Kim D.S."/>
            <person name="De Juan-Pardo E."/>
            <person name="Demeyer K."/>
            <person name="Hole K."/>
            <person name="Larrea E."/>
            <person name="Timmerman E."/>
            <person name="Prieto J."/>
            <person name="Arnesen T."/>
            <person name="Sherman F."/>
            <person name="Gevaert K."/>
            <person name="Aldabe R."/>
        </authorList>
    </citation>
    <scope>IDENTIFICATION BY MASS SPECTROMETRY [LARGE SCALE ANALYSIS]</scope>
</reference>
<reference key="12">
    <citation type="journal article" date="2006" name="Mol. Cell">
        <title>Structural biology of RNA polymerase III: subcomplex C17/25 X-ray structure and 11 subunit enzyme model.</title>
        <authorList>
            <person name="Jasiak A.J."/>
            <person name="Armache K.J."/>
            <person name="Martens B."/>
            <person name="Jansen R.P."/>
            <person name="Cramer P."/>
        </authorList>
    </citation>
    <scope>3D-STRUCTURE MODELING OF THE POL III CORE COMPLEX</scope>
</reference>